<name>SPEB_SERP5</name>
<organism>
    <name type="scientific">Serratia proteamaculans (strain 568)</name>
    <dbReference type="NCBI Taxonomy" id="399741"/>
    <lineage>
        <taxon>Bacteria</taxon>
        <taxon>Pseudomonadati</taxon>
        <taxon>Pseudomonadota</taxon>
        <taxon>Gammaproteobacteria</taxon>
        <taxon>Enterobacterales</taxon>
        <taxon>Yersiniaceae</taxon>
        <taxon>Serratia</taxon>
    </lineage>
</organism>
<comment type="function">
    <text evidence="1">Catalyzes the formation of putrescine from agmatine.</text>
</comment>
<comment type="catalytic activity">
    <reaction evidence="1">
        <text>agmatine + H2O = urea + putrescine</text>
        <dbReference type="Rhea" id="RHEA:13929"/>
        <dbReference type="ChEBI" id="CHEBI:15377"/>
        <dbReference type="ChEBI" id="CHEBI:16199"/>
        <dbReference type="ChEBI" id="CHEBI:58145"/>
        <dbReference type="ChEBI" id="CHEBI:326268"/>
        <dbReference type="EC" id="3.5.3.11"/>
    </reaction>
</comment>
<comment type="cofactor">
    <cofactor evidence="1">
        <name>Mn(2+)</name>
        <dbReference type="ChEBI" id="CHEBI:29035"/>
    </cofactor>
</comment>
<comment type="pathway">
    <text evidence="1">Amine and polyamine biosynthesis; putrescine biosynthesis via agmatine pathway; putrescine from agmatine: step 1/1.</text>
</comment>
<comment type="similarity">
    <text evidence="1">Belongs to the arginase family. Agmatinase subfamily.</text>
</comment>
<sequence length="306" mass="33374">MSTLGHKSDNSLVSNAFGFLRFPLNFMPYDSDAEWVITGIPFDMATSGRAGGRHGPAAIRQVSTNLAWEGNRWPWNFDLRDRVNVVDCGDIVFNFGDAQSMSDNLQAHAEKLLAAGKRMLSFGGDHFVTLPLLRAHAKHFGKMALVHFDAHTDTYANGSQYDHGTMFFHAPNEGLIDPTHSVQIGIRTEYDHDNGFTVLDAAQVNDRSADDLLAQIKQIVGDMPVYLTFDIDCLDPAFAPGTGTPVIGGLTSDRALKLVRGMQSLNIVGMDVVEVAPAYDQSEITALAAATLGLEMLYLQAAKKTK</sequence>
<accession>A8GIX7</accession>
<keyword id="KW-0378">Hydrolase</keyword>
<keyword id="KW-0464">Manganese</keyword>
<keyword id="KW-0479">Metal-binding</keyword>
<keyword id="KW-0620">Polyamine biosynthesis</keyword>
<keyword id="KW-0661">Putrescine biosynthesis</keyword>
<keyword id="KW-0745">Spermidine biosynthesis</keyword>
<proteinExistence type="inferred from homology"/>
<reference key="1">
    <citation type="submission" date="2007-09" db="EMBL/GenBank/DDBJ databases">
        <title>Complete sequence of chromosome of Serratia proteamaculans 568.</title>
        <authorList>
            <consortium name="US DOE Joint Genome Institute"/>
            <person name="Copeland A."/>
            <person name="Lucas S."/>
            <person name="Lapidus A."/>
            <person name="Barry K."/>
            <person name="Glavina del Rio T."/>
            <person name="Dalin E."/>
            <person name="Tice H."/>
            <person name="Pitluck S."/>
            <person name="Chain P."/>
            <person name="Malfatti S."/>
            <person name="Shin M."/>
            <person name="Vergez L."/>
            <person name="Schmutz J."/>
            <person name="Larimer F."/>
            <person name="Land M."/>
            <person name="Hauser L."/>
            <person name="Kyrpides N."/>
            <person name="Kim E."/>
            <person name="Taghavi S."/>
            <person name="Newman L."/>
            <person name="Vangronsveld J."/>
            <person name="van der Lelie D."/>
            <person name="Richardson P."/>
        </authorList>
    </citation>
    <scope>NUCLEOTIDE SEQUENCE [LARGE SCALE GENOMIC DNA]</scope>
    <source>
        <strain>568</strain>
    </source>
</reference>
<protein>
    <recommendedName>
        <fullName evidence="1">Agmatinase</fullName>
        <ecNumber evidence="1">3.5.3.11</ecNumber>
    </recommendedName>
    <alternativeName>
        <fullName evidence="1">Agmatine ureohydrolase</fullName>
        <shortName evidence="1">AUH</shortName>
    </alternativeName>
</protein>
<evidence type="ECO:0000255" key="1">
    <source>
        <dbReference type="HAMAP-Rule" id="MF_01418"/>
    </source>
</evidence>
<feature type="chain" id="PRO_1000068497" description="Agmatinase">
    <location>
        <begin position="1"/>
        <end position="306"/>
    </location>
</feature>
<feature type="binding site" evidence="1">
    <location>
        <position position="126"/>
    </location>
    <ligand>
        <name>Mn(2+)</name>
        <dbReference type="ChEBI" id="CHEBI:29035"/>
    </ligand>
</feature>
<feature type="binding site" evidence="1">
    <location>
        <position position="149"/>
    </location>
    <ligand>
        <name>Mn(2+)</name>
        <dbReference type="ChEBI" id="CHEBI:29035"/>
    </ligand>
</feature>
<feature type="binding site" evidence="1">
    <location>
        <position position="151"/>
    </location>
    <ligand>
        <name>Mn(2+)</name>
        <dbReference type="ChEBI" id="CHEBI:29035"/>
    </ligand>
</feature>
<feature type="binding site" evidence="1">
    <location>
        <position position="153"/>
    </location>
    <ligand>
        <name>Mn(2+)</name>
        <dbReference type="ChEBI" id="CHEBI:29035"/>
    </ligand>
</feature>
<feature type="binding site" evidence="1">
    <location>
        <position position="230"/>
    </location>
    <ligand>
        <name>Mn(2+)</name>
        <dbReference type="ChEBI" id="CHEBI:29035"/>
    </ligand>
</feature>
<feature type="binding site" evidence="1">
    <location>
        <position position="232"/>
    </location>
    <ligand>
        <name>Mn(2+)</name>
        <dbReference type="ChEBI" id="CHEBI:29035"/>
    </ligand>
</feature>
<dbReference type="EC" id="3.5.3.11" evidence="1"/>
<dbReference type="EMBL" id="CP000826">
    <property type="protein sequence ID" value="ABV43067.1"/>
    <property type="molecule type" value="Genomic_DNA"/>
</dbReference>
<dbReference type="SMR" id="A8GIX7"/>
<dbReference type="STRING" id="399741.Spro_3972"/>
<dbReference type="KEGG" id="spe:Spro_3972"/>
<dbReference type="eggNOG" id="COG0010">
    <property type="taxonomic scope" value="Bacteria"/>
</dbReference>
<dbReference type="HOGENOM" id="CLU_039478_0_0_6"/>
<dbReference type="OrthoDB" id="9789727at2"/>
<dbReference type="UniPathway" id="UPA00534">
    <property type="reaction ID" value="UER00287"/>
</dbReference>
<dbReference type="GO" id="GO:0008783">
    <property type="term" value="F:agmatinase activity"/>
    <property type="evidence" value="ECO:0007669"/>
    <property type="project" value="UniProtKB-UniRule"/>
</dbReference>
<dbReference type="GO" id="GO:0030145">
    <property type="term" value="F:manganese ion binding"/>
    <property type="evidence" value="ECO:0007669"/>
    <property type="project" value="InterPro"/>
</dbReference>
<dbReference type="GO" id="GO:0033389">
    <property type="term" value="P:putrescine biosynthetic process from arginine, via agmatine"/>
    <property type="evidence" value="ECO:0007669"/>
    <property type="project" value="TreeGrafter"/>
</dbReference>
<dbReference type="GO" id="GO:0008295">
    <property type="term" value="P:spermidine biosynthetic process"/>
    <property type="evidence" value="ECO:0007669"/>
    <property type="project" value="UniProtKB-UniRule"/>
</dbReference>
<dbReference type="CDD" id="cd11592">
    <property type="entry name" value="Agmatinase_PAH"/>
    <property type="match status" value="1"/>
</dbReference>
<dbReference type="FunFam" id="3.40.800.10:FF:000001">
    <property type="entry name" value="Agmatinase"/>
    <property type="match status" value="1"/>
</dbReference>
<dbReference type="Gene3D" id="3.40.800.10">
    <property type="entry name" value="Ureohydrolase domain"/>
    <property type="match status" value="1"/>
</dbReference>
<dbReference type="HAMAP" id="MF_01418">
    <property type="entry name" value="SpeB"/>
    <property type="match status" value="1"/>
</dbReference>
<dbReference type="InterPro" id="IPR023694">
    <property type="entry name" value="Agmatinase"/>
</dbReference>
<dbReference type="InterPro" id="IPR005925">
    <property type="entry name" value="Agmatinase-rel"/>
</dbReference>
<dbReference type="InterPro" id="IPR006035">
    <property type="entry name" value="Ureohydrolase"/>
</dbReference>
<dbReference type="InterPro" id="IPR023696">
    <property type="entry name" value="Ureohydrolase_dom_sf"/>
</dbReference>
<dbReference type="InterPro" id="IPR020855">
    <property type="entry name" value="Ureohydrolase_Mn_BS"/>
</dbReference>
<dbReference type="NCBIfam" id="TIGR01230">
    <property type="entry name" value="agmatinase"/>
    <property type="match status" value="1"/>
</dbReference>
<dbReference type="NCBIfam" id="NF002564">
    <property type="entry name" value="PRK02190.1"/>
    <property type="match status" value="1"/>
</dbReference>
<dbReference type="PANTHER" id="PTHR11358">
    <property type="entry name" value="ARGINASE/AGMATINASE"/>
    <property type="match status" value="1"/>
</dbReference>
<dbReference type="PANTHER" id="PTHR11358:SF26">
    <property type="entry name" value="GUANIDINO ACID HYDROLASE, MITOCHONDRIAL"/>
    <property type="match status" value="1"/>
</dbReference>
<dbReference type="Pfam" id="PF00491">
    <property type="entry name" value="Arginase"/>
    <property type="match status" value="1"/>
</dbReference>
<dbReference type="PIRSF" id="PIRSF036979">
    <property type="entry name" value="Arginase"/>
    <property type="match status" value="1"/>
</dbReference>
<dbReference type="SUPFAM" id="SSF52768">
    <property type="entry name" value="Arginase/deacetylase"/>
    <property type="match status" value="1"/>
</dbReference>
<dbReference type="PROSITE" id="PS01053">
    <property type="entry name" value="ARGINASE_1"/>
    <property type="match status" value="1"/>
</dbReference>
<dbReference type="PROSITE" id="PS51409">
    <property type="entry name" value="ARGINASE_2"/>
    <property type="match status" value="1"/>
</dbReference>
<gene>
    <name evidence="1" type="primary">speB</name>
    <name type="ordered locus">Spro_3972</name>
</gene>